<gene>
    <name type="primary">GDPD2</name>
    <name type="synonym">GDE3</name>
    <name type="synonym">OBDPF</name>
    <name type="ORF">UNQ1935/PRO4418</name>
</gene>
<sequence>MAESPGCCSVWARCLHCLYSCHWRKCPRERMQTSKCDCIWFGLLFLTFLLSLSWLYIGLVLLNDLHNFNEFLFRRWGHWMDWSLAFLLVISLLVTYASLLLVLALLLRLCRQPLHLHSLHKVLLLLIMLLVAAGLVGLDIQWQQEWHSLRVSLQATAPFLHIGAAAGIALLAWPVADTFYRIHRRGPKILLLLLFFGVVLVIYLAPLCISSPCIMEPRDLPPKPGLVGHRGAPMLAPENTLMSLRKTAECGATVFETDVMVSSDGVPFLMHDEHLSRTTNVASVFPTRITAHSSDFSWTELKRLNAGSWFLERRPFWGAKPLAGPDQKEAESQTVPALEELLEEAAALNLSIMFDLRRPPQNHTYYDTFVIQTLETVLNARVPQAMVFWLPDEDRANVQRRAPGMRQIYGRQGGNRTERPQFLNLPYQDLPLLDIKALHKDNVSVNLFVVNKPWLFSLLWCAGVDSVTTNDCQLLQQMRYPIWLITPQTYLIIWVITNCVSTMLLLWTFLLQRRFVKKRGKTGLETAVLLTRINNFMME</sequence>
<proteinExistence type="evidence at protein level"/>
<reference key="1">
    <citation type="journal article" date="2003" name="J. Biol. Chem.">
        <title>Novel membrane protein containing glycerophosphodiester phosphodiesterase motif is transiently expressed during osteoblast differentiation.</title>
        <authorList>
            <person name="Yanaka N."/>
            <person name="Imai Y."/>
            <person name="Kawai E."/>
            <person name="Akatsuka H."/>
            <person name="Wakimoto K."/>
            <person name="Nogusa Y."/>
            <person name="Kato N."/>
            <person name="Chiba H."/>
            <person name="Kotani E."/>
            <person name="Omori K."/>
            <person name="Sakurai N."/>
        </authorList>
    </citation>
    <scope>NUCLEOTIDE SEQUENCE [MRNA] (ISOFORM 1)</scope>
    <source>
        <tissue>Spleen</tissue>
    </source>
</reference>
<reference key="2">
    <citation type="journal article" date="2003" name="Genome Res.">
        <title>The secreted protein discovery initiative (SPDI), a large-scale effort to identify novel human secreted and transmembrane proteins: a bioinformatics assessment.</title>
        <authorList>
            <person name="Clark H.F."/>
            <person name="Gurney A.L."/>
            <person name="Abaya E."/>
            <person name="Baker K."/>
            <person name="Baldwin D.T."/>
            <person name="Brush J."/>
            <person name="Chen J."/>
            <person name="Chow B."/>
            <person name="Chui C."/>
            <person name="Crowley C."/>
            <person name="Currell B."/>
            <person name="Deuel B."/>
            <person name="Dowd P."/>
            <person name="Eaton D."/>
            <person name="Foster J.S."/>
            <person name="Grimaldi C."/>
            <person name="Gu Q."/>
            <person name="Hass P.E."/>
            <person name="Heldens S."/>
            <person name="Huang A."/>
            <person name="Kim H.S."/>
            <person name="Klimowski L."/>
            <person name="Jin Y."/>
            <person name="Johnson S."/>
            <person name="Lee J."/>
            <person name="Lewis L."/>
            <person name="Liao D."/>
            <person name="Mark M.R."/>
            <person name="Robbie E."/>
            <person name="Sanchez C."/>
            <person name="Schoenfeld J."/>
            <person name="Seshagiri S."/>
            <person name="Simmons L."/>
            <person name="Singh J."/>
            <person name="Smith V."/>
            <person name="Stinson J."/>
            <person name="Vagts A."/>
            <person name="Vandlen R.L."/>
            <person name="Watanabe C."/>
            <person name="Wieand D."/>
            <person name="Woods K."/>
            <person name="Xie M.-H."/>
            <person name="Yansura D.G."/>
            <person name="Yi S."/>
            <person name="Yu G."/>
            <person name="Yuan J."/>
            <person name="Zhang M."/>
            <person name="Zhang Z."/>
            <person name="Goddard A.D."/>
            <person name="Wood W.I."/>
            <person name="Godowski P.J."/>
            <person name="Gray A.M."/>
        </authorList>
    </citation>
    <scope>NUCLEOTIDE SEQUENCE [LARGE SCALE MRNA] (ISOFORM 1)</scope>
</reference>
<reference key="3">
    <citation type="journal article" date="2004" name="Nat. Genet.">
        <title>Complete sequencing and characterization of 21,243 full-length human cDNAs.</title>
        <authorList>
            <person name="Ota T."/>
            <person name="Suzuki Y."/>
            <person name="Nishikawa T."/>
            <person name="Otsuki T."/>
            <person name="Sugiyama T."/>
            <person name="Irie R."/>
            <person name="Wakamatsu A."/>
            <person name="Hayashi K."/>
            <person name="Sato H."/>
            <person name="Nagai K."/>
            <person name="Kimura K."/>
            <person name="Makita H."/>
            <person name="Sekine M."/>
            <person name="Obayashi M."/>
            <person name="Nishi T."/>
            <person name="Shibahara T."/>
            <person name="Tanaka T."/>
            <person name="Ishii S."/>
            <person name="Yamamoto J."/>
            <person name="Saito K."/>
            <person name="Kawai Y."/>
            <person name="Isono Y."/>
            <person name="Nakamura Y."/>
            <person name="Nagahari K."/>
            <person name="Murakami K."/>
            <person name="Yasuda T."/>
            <person name="Iwayanagi T."/>
            <person name="Wagatsuma M."/>
            <person name="Shiratori A."/>
            <person name="Sudo H."/>
            <person name="Hosoiri T."/>
            <person name="Kaku Y."/>
            <person name="Kodaira H."/>
            <person name="Kondo H."/>
            <person name="Sugawara M."/>
            <person name="Takahashi M."/>
            <person name="Kanda K."/>
            <person name="Yokoi T."/>
            <person name="Furuya T."/>
            <person name="Kikkawa E."/>
            <person name="Omura Y."/>
            <person name="Abe K."/>
            <person name="Kamihara K."/>
            <person name="Katsuta N."/>
            <person name="Sato K."/>
            <person name="Tanikawa M."/>
            <person name="Yamazaki M."/>
            <person name="Ninomiya K."/>
            <person name="Ishibashi T."/>
            <person name="Yamashita H."/>
            <person name="Murakawa K."/>
            <person name="Fujimori K."/>
            <person name="Tanai H."/>
            <person name="Kimata M."/>
            <person name="Watanabe M."/>
            <person name="Hiraoka S."/>
            <person name="Chiba Y."/>
            <person name="Ishida S."/>
            <person name="Ono Y."/>
            <person name="Takiguchi S."/>
            <person name="Watanabe S."/>
            <person name="Yosida M."/>
            <person name="Hotuta T."/>
            <person name="Kusano J."/>
            <person name="Kanehori K."/>
            <person name="Takahashi-Fujii A."/>
            <person name="Hara H."/>
            <person name="Tanase T.-O."/>
            <person name="Nomura Y."/>
            <person name="Togiya S."/>
            <person name="Komai F."/>
            <person name="Hara R."/>
            <person name="Takeuchi K."/>
            <person name="Arita M."/>
            <person name="Imose N."/>
            <person name="Musashino K."/>
            <person name="Yuuki H."/>
            <person name="Oshima A."/>
            <person name="Sasaki N."/>
            <person name="Aotsuka S."/>
            <person name="Yoshikawa Y."/>
            <person name="Matsunawa H."/>
            <person name="Ichihara T."/>
            <person name="Shiohata N."/>
            <person name="Sano S."/>
            <person name="Moriya S."/>
            <person name="Momiyama H."/>
            <person name="Satoh N."/>
            <person name="Takami S."/>
            <person name="Terashima Y."/>
            <person name="Suzuki O."/>
            <person name="Nakagawa S."/>
            <person name="Senoh A."/>
            <person name="Mizoguchi H."/>
            <person name="Goto Y."/>
            <person name="Shimizu F."/>
            <person name="Wakebe H."/>
            <person name="Hishigaki H."/>
            <person name="Watanabe T."/>
            <person name="Sugiyama A."/>
            <person name="Takemoto M."/>
            <person name="Kawakami B."/>
            <person name="Yamazaki M."/>
            <person name="Watanabe K."/>
            <person name="Kumagai A."/>
            <person name="Itakura S."/>
            <person name="Fukuzumi Y."/>
            <person name="Fujimori Y."/>
            <person name="Komiyama M."/>
            <person name="Tashiro H."/>
            <person name="Tanigami A."/>
            <person name="Fujiwara T."/>
            <person name="Ono T."/>
            <person name="Yamada K."/>
            <person name="Fujii Y."/>
            <person name="Ozaki K."/>
            <person name="Hirao M."/>
            <person name="Ohmori Y."/>
            <person name="Kawabata A."/>
            <person name="Hikiji T."/>
            <person name="Kobatake N."/>
            <person name="Inagaki H."/>
            <person name="Ikema Y."/>
            <person name="Okamoto S."/>
            <person name="Okitani R."/>
            <person name="Kawakami T."/>
            <person name="Noguchi S."/>
            <person name="Itoh T."/>
            <person name="Shigeta K."/>
            <person name="Senba T."/>
            <person name="Matsumura K."/>
            <person name="Nakajima Y."/>
            <person name="Mizuno T."/>
            <person name="Morinaga M."/>
            <person name="Sasaki M."/>
            <person name="Togashi T."/>
            <person name="Oyama M."/>
            <person name="Hata H."/>
            <person name="Watanabe M."/>
            <person name="Komatsu T."/>
            <person name="Mizushima-Sugano J."/>
            <person name="Satoh T."/>
            <person name="Shirai Y."/>
            <person name="Takahashi Y."/>
            <person name="Nakagawa K."/>
            <person name="Okumura K."/>
            <person name="Nagase T."/>
            <person name="Nomura N."/>
            <person name="Kikuchi H."/>
            <person name="Masuho Y."/>
            <person name="Yamashita R."/>
            <person name="Nakai K."/>
            <person name="Yada T."/>
            <person name="Nakamura Y."/>
            <person name="Ohara O."/>
            <person name="Isogai T."/>
            <person name="Sugano S."/>
        </authorList>
    </citation>
    <scope>NUCLEOTIDE SEQUENCE [LARGE SCALE MRNA] (ISOFORMS 1; 2 AND 3)</scope>
    <source>
        <tissue>Caudate nucleus</tissue>
        <tissue>Colon mucosa</tissue>
        <tissue>Spleen</tissue>
    </source>
</reference>
<reference key="4">
    <citation type="journal article" date="2005" name="Nature">
        <title>The DNA sequence of the human X chromosome.</title>
        <authorList>
            <person name="Ross M.T."/>
            <person name="Grafham D.V."/>
            <person name="Coffey A.J."/>
            <person name="Scherer S."/>
            <person name="McLay K."/>
            <person name="Muzny D."/>
            <person name="Platzer M."/>
            <person name="Howell G.R."/>
            <person name="Burrows C."/>
            <person name="Bird C.P."/>
            <person name="Frankish A."/>
            <person name="Lovell F.L."/>
            <person name="Howe K.L."/>
            <person name="Ashurst J.L."/>
            <person name="Fulton R.S."/>
            <person name="Sudbrak R."/>
            <person name="Wen G."/>
            <person name="Jones M.C."/>
            <person name="Hurles M.E."/>
            <person name="Andrews T.D."/>
            <person name="Scott C.E."/>
            <person name="Searle S."/>
            <person name="Ramser J."/>
            <person name="Whittaker A."/>
            <person name="Deadman R."/>
            <person name="Carter N.P."/>
            <person name="Hunt S.E."/>
            <person name="Chen R."/>
            <person name="Cree A."/>
            <person name="Gunaratne P."/>
            <person name="Havlak P."/>
            <person name="Hodgson A."/>
            <person name="Metzker M.L."/>
            <person name="Richards S."/>
            <person name="Scott G."/>
            <person name="Steffen D."/>
            <person name="Sodergren E."/>
            <person name="Wheeler D.A."/>
            <person name="Worley K.C."/>
            <person name="Ainscough R."/>
            <person name="Ambrose K.D."/>
            <person name="Ansari-Lari M.A."/>
            <person name="Aradhya S."/>
            <person name="Ashwell R.I."/>
            <person name="Babbage A.K."/>
            <person name="Bagguley C.L."/>
            <person name="Ballabio A."/>
            <person name="Banerjee R."/>
            <person name="Barker G.E."/>
            <person name="Barlow K.F."/>
            <person name="Barrett I.P."/>
            <person name="Bates K.N."/>
            <person name="Beare D.M."/>
            <person name="Beasley H."/>
            <person name="Beasley O."/>
            <person name="Beck A."/>
            <person name="Bethel G."/>
            <person name="Blechschmidt K."/>
            <person name="Brady N."/>
            <person name="Bray-Allen S."/>
            <person name="Bridgeman A.M."/>
            <person name="Brown A.J."/>
            <person name="Brown M.J."/>
            <person name="Bonnin D."/>
            <person name="Bruford E.A."/>
            <person name="Buhay C."/>
            <person name="Burch P."/>
            <person name="Burford D."/>
            <person name="Burgess J."/>
            <person name="Burrill W."/>
            <person name="Burton J."/>
            <person name="Bye J.M."/>
            <person name="Carder C."/>
            <person name="Carrel L."/>
            <person name="Chako J."/>
            <person name="Chapman J.C."/>
            <person name="Chavez D."/>
            <person name="Chen E."/>
            <person name="Chen G."/>
            <person name="Chen Y."/>
            <person name="Chen Z."/>
            <person name="Chinault C."/>
            <person name="Ciccodicola A."/>
            <person name="Clark S.Y."/>
            <person name="Clarke G."/>
            <person name="Clee C.M."/>
            <person name="Clegg S."/>
            <person name="Clerc-Blankenburg K."/>
            <person name="Clifford K."/>
            <person name="Cobley V."/>
            <person name="Cole C.G."/>
            <person name="Conquer J.S."/>
            <person name="Corby N."/>
            <person name="Connor R.E."/>
            <person name="David R."/>
            <person name="Davies J."/>
            <person name="Davis C."/>
            <person name="Davis J."/>
            <person name="Delgado O."/>
            <person name="Deshazo D."/>
            <person name="Dhami P."/>
            <person name="Ding Y."/>
            <person name="Dinh H."/>
            <person name="Dodsworth S."/>
            <person name="Draper H."/>
            <person name="Dugan-Rocha S."/>
            <person name="Dunham A."/>
            <person name="Dunn M."/>
            <person name="Durbin K.J."/>
            <person name="Dutta I."/>
            <person name="Eades T."/>
            <person name="Ellwood M."/>
            <person name="Emery-Cohen A."/>
            <person name="Errington H."/>
            <person name="Evans K.L."/>
            <person name="Faulkner L."/>
            <person name="Francis F."/>
            <person name="Frankland J."/>
            <person name="Fraser A.E."/>
            <person name="Galgoczy P."/>
            <person name="Gilbert J."/>
            <person name="Gill R."/>
            <person name="Gloeckner G."/>
            <person name="Gregory S.G."/>
            <person name="Gribble S."/>
            <person name="Griffiths C."/>
            <person name="Grocock R."/>
            <person name="Gu Y."/>
            <person name="Gwilliam R."/>
            <person name="Hamilton C."/>
            <person name="Hart E.A."/>
            <person name="Hawes A."/>
            <person name="Heath P.D."/>
            <person name="Heitmann K."/>
            <person name="Hennig S."/>
            <person name="Hernandez J."/>
            <person name="Hinzmann B."/>
            <person name="Ho S."/>
            <person name="Hoffs M."/>
            <person name="Howden P.J."/>
            <person name="Huckle E.J."/>
            <person name="Hume J."/>
            <person name="Hunt P.J."/>
            <person name="Hunt A.R."/>
            <person name="Isherwood J."/>
            <person name="Jacob L."/>
            <person name="Johnson D."/>
            <person name="Jones S."/>
            <person name="de Jong P.J."/>
            <person name="Joseph S.S."/>
            <person name="Keenan S."/>
            <person name="Kelly S."/>
            <person name="Kershaw J.K."/>
            <person name="Khan Z."/>
            <person name="Kioschis P."/>
            <person name="Klages S."/>
            <person name="Knights A.J."/>
            <person name="Kosiura A."/>
            <person name="Kovar-Smith C."/>
            <person name="Laird G.K."/>
            <person name="Langford C."/>
            <person name="Lawlor S."/>
            <person name="Leversha M."/>
            <person name="Lewis L."/>
            <person name="Liu W."/>
            <person name="Lloyd C."/>
            <person name="Lloyd D.M."/>
            <person name="Loulseged H."/>
            <person name="Loveland J.E."/>
            <person name="Lovell J.D."/>
            <person name="Lozado R."/>
            <person name="Lu J."/>
            <person name="Lyne R."/>
            <person name="Ma J."/>
            <person name="Maheshwari M."/>
            <person name="Matthews L.H."/>
            <person name="McDowall J."/>
            <person name="McLaren S."/>
            <person name="McMurray A."/>
            <person name="Meidl P."/>
            <person name="Meitinger T."/>
            <person name="Milne S."/>
            <person name="Miner G."/>
            <person name="Mistry S.L."/>
            <person name="Morgan M."/>
            <person name="Morris S."/>
            <person name="Mueller I."/>
            <person name="Mullikin J.C."/>
            <person name="Nguyen N."/>
            <person name="Nordsiek G."/>
            <person name="Nyakatura G."/>
            <person name="O'dell C.N."/>
            <person name="Okwuonu G."/>
            <person name="Palmer S."/>
            <person name="Pandian R."/>
            <person name="Parker D."/>
            <person name="Parrish J."/>
            <person name="Pasternak S."/>
            <person name="Patel D."/>
            <person name="Pearce A.V."/>
            <person name="Pearson D.M."/>
            <person name="Pelan S.E."/>
            <person name="Perez L."/>
            <person name="Porter K.M."/>
            <person name="Ramsey Y."/>
            <person name="Reichwald K."/>
            <person name="Rhodes S."/>
            <person name="Ridler K.A."/>
            <person name="Schlessinger D."/>
            <person name="Schueler M.G."/>
            <person name="Sehra H.K."/>
            <person name="Shaw-Smith C."/>
            <person name="Shen H."/>
            <person name="Sheridan E.M."/>
            <person name="Shownkeen R."/>
            <person name="Skuce C.D."/>
            <person name="Smith M.L."/>
            <person name="Sotheran E.C."/>
            <person name="Steingruber H.E."/>
            <person name="Steward C.A."/>
            <person name="Storey R."/>
            <person name="Swann R.M."/>
            <person name="Swarbreck D."/>
            <person name="Tabor P.E."/>
            <person name="Taudien S."/>
            <person name="Taylor T."/>
            <person name="Teague B."/>
            <person name="Thomas K."/>
            <person name="Thorpe A."/>
            <person name="Timms K."/>
            <person name="Tracey A."/>
            <person name="Trevanion S."/>
            <person name="Tromans A.C."/>
            <person name="d'Urso M."/>
            <person name="Verduzco D."/>
            <person name="Villasana D."/>
            <person name="Waldron L."/>
            <person name="Wall M."/>
            <person name="Wang Q."/>
            <person name="Warren J."/>
            <person name="Warry G.L."/>
            <person name="Wei X."/>
            <person name="West A."/>
            <person name="Whitehead S.L."/>
            <person name="Whiteley M.N."/>
            <person name="Wilkinson J.E."/>
            <person name="Willey D.L."/>
            <person name="Williams G."/>
            <person name="Williams L."/>
            <person name="Williamson A."/>
            <person name="Williamson H."/>
            <person name="Wilming L."/>
            <person name="Woodmansey R.L."/>
            <person name="Wray P.W."/>
            <person name="Yen J."/>
            <person name="Zhang J."/>
            <person name="Zhou J."/>
            <person name="Zoghbi H."/>
            <person name="Zorilla S."/>
            <person name="Buck D."/>
            <person name="Reinhardt R."/>
            <person name="Poustka A."/>
            <person name="Rosenthal A."/>
            <person name="Lehrach H."/>
            <person name="Meindl A."/>
            <person name="Minx P.J."/>
            <person name="Hillier L.W."/>
            <person name="Willard H.F."/>
            <person name="Wilson R.K."/>
            <person name="Waterston R.H."/>
            <person name="Rice C.M."/>
            <person name="Vaudin M."/>
            <person name="Coulson A."/>
            <person name="Nelson D.L."/>
            <person name="Weinstock G."/>
            <person name="Sulston J.E."/>
            <person name="Durbin R.M."/>
            <person name="Hubbard T."/>
            <person name="Gibbs R.A."/>
            <person name="Beck S."/>
            <person name="Rogers J."/>
            <person name="Bentley D.R."/>
        </authorList>
    </citation>
    <scope>NUCLEOTIDE SEQUENCE [LARGE SCALE GENOMIC DNA]</scope>
</reference>
<reference key="5">
    <citation type="journal article" date="2004" name="Genome Res.">
        <title>The status, quality, and expansion of the NIH full-length cDNA project: the Mammalian Gene Collection (MGC).</title>
        <authorList>
            <consortium name="The MGC Project Team"/>
        </authorList>
    </citation>
    <scope>NUCLEOTIDE SEQUENCE [LARGE SCALE MRNA] (ISOFORM 1)</scope>
    <source>
        <tissue>Skin</tissue>
    </source>
</reference>
<accession>Q9HCC8</accession>
<accession>B4DRH4</accession>
<accession>B4DVC9</accession>
<accession>Q9NXJ6</accession>
<feature type="chain" id="PRO_0000251934" description="Glycerophosphoinositol inositolphosphodiesterase GDPD2">
    <location>
        <begin position="1"/>
        <end position="539"/>
    </location>
</feature>
<feature type="topological domain" description="Cytoplasmic" evidence="2">
    <location>
        <begin position="1"/>
        <end position="38"/>
    </location>
</feature>
<feature type="transmembrane region" description="Helical" evidence="2">
    <location>
        <begin position="39"/>
        <end position="59"/>
    </location>
</feature>
<feature type="topological domain" description="Extracellular" evidence="2">
    <location>
        <begin position="60"/>
        <end position="85"/>
    </location>
</feature>
<feature type="transmembrane region" description="Helical" evidence="2">
    <location>
        <begin position="86"/>
        <end position="106"/>
    </location>
</feature>
<feature type="topological domain" description="Cytoplasmic" evidence="2">
    <location>
        <begin position="107"/>
        <end position="121"/>
    </location>
</feature>
<feature type="transmembrane region" description="Helical" evidence="2">
    <location>
        <begin position="122"/>
        <end position="142"/>
    </location>
</feature>
<feature type="topological domain" description="Extracellular" evidence="2">
    <location>
        <begin position="143"/>
        <end position="154"/>
    </location>
</feature>
<feature type="transmembrane region" description="Helical" evidence="2">
    <location>
        <begin position="155"/>
        <end position="175"/>
    </location>
</feature>
<feature type="topological domain" description="Cytoplasmic" evidence="2">
    <location>
        <begin position="176"/>
        <end position="188"/>
    </location>
</feature>
<feature type="transmembrane region" description="Helical" evidence="2">
    <location>
        <begin position="189"/>
        <end position="209"/>
    </location>
</feature>
<feature type="topological domain" description="Extracellular" evidence="2">
    <location>
        <begin position="210"/>
        <end position="490"/>
    </location>
</feature>
<feature type="transmembrane region" description="Helical" evidence="2">
    <location>
        <begin position="491"/>
        <end position="511"/>
    </location>
</feature>
<feature type="topological domain" description="Cytoplasmic" evidence="2">
    <location>
        <begin position="512"/>
        <end position="539"/>
    </location>
</feature>
<feature type="domain" description="GP-PDE">
    <location>
        <begin position="224"/>
        <end position="479"/>
    </location>
</feature>
<feature type="binding site" evidence="2">
    <location>
        <position position="256"/>
    </location>
    <ligand>
        <name>a divalent metal cation</name>
        <dbReference type="ChEBI" id="CHEBI:60240"/>
    </ligand>
</feature>
<feature type="binding site" evidence="2">
    <location>
        <position position="258"/>
    </location>
    <ligand>
        <name>a divalent metal cation</name>
        <dbReference type="ChEBI" id="CHEBI:60240"/>
    </ligand>
</feature>
<feature type="binding site" evidence="2">
    <location>
        <position position="271"/>
    </location>
    <ligand>
        <name>a divalent metal cation</name>
        <dbReference type="ChEBI" id="CHEBI:60240"/>
    </ligand>
</feature>
<feature type="glycosylation site" description="N-linked (GlcNAc...) asparagine" evidence="2">
    <location>
        <position position="442"/>
    </location>
</feature>
<feature type="splice variant" id="VSP_042622" description="In isoform 2." evidence="3">
    <location>
        <begin position="1"/>
        <end position="79"/>
    </location>
</feature>
<feature type="splice variant" id="VSP_042623" description="In isoform 3." evidence="3">
    <original>K</original>
    <variation>KDRFLLPAQAGLKLLASSNLPASASQSAGITGLSHCPPQPPGYKHELSHLAM</variation>
    <location>
        <position position="436"/>
    </location>
</feature>
<feature type="sequence conflict" description="In Ref. 3; BAA91014." evidence="4" ref="3">
    <original>E</original>
    <variation>G</variation>
    <location>
        <position position="418"/>
    </location>
</feature>
<organism>
    <name type="scientific">Homo sapiens</name>
    <name type="common">Human</name>
    <dbReference type="NCBI Taxonomy" id="9606"/>
    <lineage>
        <taxon>Eukaryota</taxon>
        <taxon>Metazoa</taxon>
        <taxon>Chordata</taxon>
        <taxon>Craniata</taxon>
        <taxon>Vertebrata</taxon>
        <taxon>Euteleostomi</taxon>
        <taxon>Mammalia</taxon>
        <taxon>Eutheria</taxon>
        <taxon>Euarchontoglires</taxon>
        <taxon>Primates</taxon>
        <taxon>Haplorrhini</taxon>
        <taxon>Catarrhini</taxon>
        <taxon>Hominidae</taxon>
        <taxon>Homo</taxon>
    </lineage>
</organism>
<evidence type="ECO:0000250" key="1"/>
<evidence type="ECO:0000255" key="2"/>
<evidence type="ECO:0000303" key="3">
    <source>
    </source>
</evidence>
<evidence type="ECO:0000305" key="4"/>
<comment type="function">
    <text evidence="1">Has glycerophosphoinositol inositolphosphodiesterase activity and specifically hydrolyzes glycerophosphoinositol, with no activity for other substrates such as glycerophosphoinositol 4-phosphate, glycerophosphocholine, glycerophosphoethanolamine, and glycerophosphoserine. Accelerates the program of osteoblast differentiation and growth. May play a role in remodeling of the actin cytoskeleton (By similarity).</text>
</comment>
<comment type="catalytic activity">
    <reaction>
        <text>sn-glycero-3-phospho-1D-myo-inositol + H2O = 1D-myo-inositol 1-phosphate + glycerol + H(+)</text>
        <dbReference type="Rhea" id="RHEA:14033"/>
        <dbReference type="ChEBI" id="CHEBI:15377"/>
        <dbReference type="ChEBI" id="CHEBI:15378"/>
        <dbReference type="ChEBI" id="CHEBI:17754"/>
        <dbReference type="ChEBI" id="CHEBI:58433"/>
        <dbReference type="ChEBI" id="CHEBI:58444"/>
        <dbReference type="EC" id="3.1.4.43"/>
    </reaction>
</comment>
<comment type="cofactor">
    <cofactor>
        <name>Ca(2+)</name>
        <dbReference type="ChEBI" id="CHEBI:29108"/>
    </cofactor>
</comment>
<comment type="subcellular location">
    <subcellularLocation>
        <location>Cell membrane</location>
        <topology>Multi-pass membrane protein</topology>
    </subcellularLocation>
    <subcellularLocation>
        <location>Cytoplasm</location>
    </subcellularLocation>
    <subcellularLocation>
        <location evidence="1">Cytoplasm</location>
        <location evidence="1">Cytoskeleton</location>
    </subcellularLocation>
    <text evidence="1">Colocalizes with the actin cytoskeleton.</text>
</comment>
<comment type="alternative products">
    <event type="alternative splicing"/>
    <isoform>
        <id>Q9HCC8-1</id>
        <name>1</name>
        <sequence type="displayed"/>
    </isoform>
    <isoform>
        <id>Q9HCC8-2</id>
        <name>2</name>
        <sequence type="described" ref="VSP_042622"/>
    </isoform>
    <isoform>
        <id>Q9HCC8-3</id>
        <name>3</name>
        <sequence type="described" ref="VSP_042623"/>
    </isoform>
</comment>
<comment type="similarity">
    <text evidence="4">Belongs to the glycerophosphoryl diester phosphodiesterase family.</text>
</comment>
<comment type="caution">
    <text evidence="4">The catalytic domain of GDPD2 is oriented extracellularly; Glycerophosphoinositol is hydrolyzed in the medium of cells overexpressing Gdpd2, whereas intracellular levels of glycerophosphoinositol is not affected.</text>
</comment>
<comment type="sequence caution" evidence="4">
    <conflict type="frameshift">
        <sequence resource="EMBL-CDS" id="BAA91014"/>
    </conflict>
</comment>
<name>GDPD2_HUMAN</name>
<keyword id="KW-0025">Alternative splicing</keyword>
<keyword id="KW-1003">Cell membrane</keyword>
<keyword id="KW-0963">Cytoplasm</keyword>
<keyword id="KW-0206">Cytoskeleton</keyword>
<keyword id="KW-0325">Glycoprotein</keyword>
<keyword id="KW-0378">Hydrolase</keyword>
<keyword id="KW-0472">Membrane</keyword>
<keyword id="KW-0479">Metal-binding</keyword>
<keyword id="KW-1267">Proteomics identification</keyword>
<keyword id="KW-1185">Reference proteome</keyword>
<keyword id="KW-0812">Transmembrane</keyword>
<keyword id="KW-1133">Transmembrane helix</keyword>
<dbReference type="EC" id="3.1.4.43"/>
<dbReference type="EMBL" id="AB048363">
    <property type="protein sequence ID" value="BAB13350.1"/>
    <property type="molecule type" value="mRNA"/>
</dbReference>
<dbReference type="EMBL" id="AY358986">
    <property type="protein sequence ID" value="AAQ89345.1"/>
    <property type="molecule type" value="mRNA"/>
</dbReference>
<dbReference type="EMBL" id="AK000214">
    <property type="protein sequence ID" value="BAA91014.1"/>
    <property type="status" value="ALT_FRAME"/>
    <property type="molecule type" value="mRNA"/>
</dbReference>
<dbReference type="EMBL" id="AK299255">
    <property type="protein sequence ID" value="BAG61286.1"/>
    <property type="molecule type" value="mRNA"/>
</dbReference>
<dbReference type="EMBL" id="AK301025">
    <property type="protein sequence ID" value="BAG62641.1"/>
    <property type="molecule type" value="mRNA"/>
</dbReference>
<dbReference type="EMBL" id="AK316035">
    <property type="protein sequence ID" value="BAH14406.1"/>
    <property type="molecule type" value="mRNA"/>
</dbReference>
<dbReference type="EMBL" id="AL139398">
    <property type="status" value="NOT_ANNOTATED_CDS"/>
    <property type="molecule type" value="Genomic_DNA"/>
</dbReference>
<dbReference type="EMBL" id="BC032009">
    <property type="protein sequence ID" value="AAH32009.1"/>
    <property type="molecule type" value="mRNA"/>
</dbReference>
<dbReference type="CCDS" id="CCDS14402.1">
    <molecule id="Q9HCC8-1"/>
</dbReference>
<dbReference type="CCDS" id="CCDS55437.1">
    <molecule id="Q9HCC8-3"/>
</dbReference>
<dbReference type="CCDS" id="CCDS55438.1">
    <molecule id="Q9HCC8-2"/>
</dbReference>
<dbReference type="RefSeq" id="NP_001164662.1">
    <molecule id="Q9HCC8-2"/>
    <property type="nucleotide sequence ID" value="NM_001171191.2"/>
</dbReference>
<dbReference type="RefSeq" id="NP_001164663.1">
    <molecule id="Q9HCC8-3"/>
    <property type="nucleotide sequence ID" value="NM_001171192.2"/>
</dbReference>
<dbReference type="RefSeq" id="NP_001164664.1">
    <molecule id="Q9HCC8-2"/>
    <property type="nucleotide sequence ID" value="NM_001171193.2"/>
</dbReference>
<dbReference type="RefSeq" id="NP_060181.2">
    <molecule id="Q9HCC8-1"/>
    <property type="nucleotide sequence ID" value="NM_017711.3"/>
</dbReference>
<dbReference type="SMR" id="Q9HCC8"/>
<dbReference type="BioGRID" id="120207">
    <property type="interactions" value="5"/>
</dbReference>
<dbReference type="FunCoup" id="Q9HCC8">
    <property type="interactions" value="390"/>
</dbReference>
<dbReference type="IntAct" id="Q9HCC8">
    <property type="interactions" value="43"/>
</dbReference>
<dbReference type="MINT" id="Q9HCC8"/>
<dbReference type="STRING" id="9606.ENSP00000414019"/>
<dbReference type="GlyCosmos" id="Q9HCC8">
    <property type="glycosylation" value="1 site, No reported glycans"/>
</dbReference>
<dbReference type="GlyGen" id="Q9HCC8">
    <property type="glycosylation" value="1 site"/>
</dbReference>
<dbReference type="iPTMnet" id="Q9HCC8"/>
<dbReference type="PhosphoSitePlus" id="Q9HCC8"/>
<dbReference type="BioMuta" id="GDPD2"/>
<dbReference type="DMDM" id="74752794"/>
<dbReference type="jPOST" id="Q9HCC8"/>
<dbReference type="MassIVE" id="Q9HCC8"/>
<dbReference type="PaxDb" id="9606-ENSP00000414019"/>
<dbReference type="PeptideAtlas" id="Q9HCC8"/>
<dbReference type="ProteomicsDB" id="81668">
    <molecule id="Q9HCC8-1"/>
</dbReference>
<dbReference type="ProteomicsDB" id="81669">
    <molecule id="Q9HCC8-2"/>
</dbReference>
<dbReference type="ProteomicsDB" id="81670">
    <molecule id="Q9HCC8-3"/>
</dbReference>
<dbReference type="Antibodypedia" id="27419">
    <property type="antibodies" value="130 antibodies from 20 providers"/>
</dbReference>
<dbReference type="DNASU" id="54857"/>
<dbReference type="Ensembl" id="ENST00000374382.4">
    <molecule id="Q9HCC8-1"/>
    <property type="protein sequence ID" value="ENSP00000363503.3"/>
    <property type="gene ID" value="ENSG00000130055.14"/>
</dbReference>
<dbReference type="Ensembl" id="ENST00000453994.6">
    <molecule id="Q9HCC8-3"/>
    <property type="protein sequence ID" value="ENSP00000414019.2"/>
    <property type="gene ID" value="ENSG00000130055.14"/>
</dbReference>
<dbReference type="Ensembl" id="ENST00000536730.5">
    <molecule id="Q9HCC8-2"/>
    <property type="protein sequence ID" value="ENSP00000445982.1"/>
    <property type="gene ID" value="ENSG00000130055.14"/>
</dbReference>
<dbReference type="Ensembl" id="ENST00000538649.5">
    <molecule id="Q9HCC8-2"/>
    <property type="protein sequence ID" value="ENSP00000444601.1"/>
    <property type="gene ID" value="ENSG00000130055.14"/>
</dbReference>
<dbReference type="GeneID" id="54857"/>
<dbReference type="KEGG" id="hsa:54857"/>
<dbReference type="MANE-Select" id="ENST00000374382.4">
    <property type="protein sequence ID" value="ENSP00000363503.3"/>
    <property type="RefSeq nucleotide sequence ID" value="NM_017711.4"/>
    <property type="RefSeq protein sequence ID" value="NP_060181.2"/>
</dbReference>
<dbReference type="UCSC" id="uc004dyh.4">
    <molecule id="Q9HCC8-1"/>
    <property type="organism name" value="human"/>
</dbReference>
<dbReference type="AGR" id="HGNC:25974"/>
<dbReference type="CTD" id="54857"/>
<dbReference type="GeneCards" id="GDPD2"/>
<dbReference type="HGNC" id="HGNC:25974">
    <property type="gene designation" value="GDPD2"/>
</dbReference>
<dbReference type="HPA" id="ENSG00000130055">
    <property type="expression patterns" value="Group enriched (choroid plexus, intestine, lymphoid tissue, skin)"/>
</dbReference>
<dbReference type="MIM" id="300940">
    <property type="type" value="gene"/>
</dbReference>
<dbReference type="neXtProt" id="NX_Q9HCC8"/>
<dbReference type="OpenTargets" id="ENSG00000130055"/>
<dbReference type="PharmGKB" id="PA134907263"/>
<dbReference type="VEuPathDB" id="HostDB:ENSG00000130055"/>
<dbReference type="eggNOG" id="KOG2258">
    <property type="taxonomic scope" value="Eukaryota"/>
</dbReference>
<dbReference type="GeneTree" id="ENSGT00940000159625"/>
<dbReference type="HOGENOM" id="CLU_024259_1_0_1"/>
<dbReference type="InParanoid" id="Q9HCC8"/>
<dbReference type="OMA" id="DPPGCCS"/>
<dbReference type="OrthoDB" id="1058301at2759"/>
<dbReference type="PAN-GO" id="Q9HCC8">
    <property type="GO annotations" value="2 GO annotations based on evolutionary models"/>
</dbReference>
<dbReference type="PhylomeDB" id="Q9HCC8"/>
<dbReference type="TreeFam" id="TF313692"/>
<dbReference type="BRENDA" id="3.1.4.46">
    <property type="organism ID" value="2681"/>
</dbReference>
<dbReference type="BRENDA" id="4.6.1.14">
    <property type="organism ID" value="2681"/>
</dbReference>
<dbReference type="PathwayCommons" id="Q9HCC8"/>
<dbReference type="SignaLink" id="Q9HCC8"/>
<dbReference type="BioGRID-ORCS" id="54857">
    <property type="hits" value="20 hits in 773 CRISPR screens"/>
</dbReference>
<dbReference type="ChiTaRS" id="GDPD2">
    <property type="organism name" value="human"/>
</dbReference>
<dbReference type="GenomeRNAi" id="54857"/>
<dbReference type="Pharos" id="Q9HCC8">
    <property type="development level" value="Tbio"/>
</dbReference>
<dbReference type="PRO" id="PR:Q9HCC8"/>
<dbReference type="Proteomes" id="UP000005640">
    <property type="component" value="Chromosome X"/>
</dbReference>
<dbReference type="RNAct" id="Q9HCC8">
    <property type="molecule type" value="protein"/>
</dbReference>
<dbReference type="Bgee" id="ENSG00000130055">
    <property type="expression patterns" value="Expressed in spleen and 128 other cell types or tissues"/>
</dbReference>
<dbReference type="GO" id="GO:0005884">
    <property type="term" value="C:actin filament"/>
    <property type="evidence" value="ECO:0007669"/>
    <property type="project" value="Ensembl"/>
</dbReference>
<dbReference type="GO" id="GO:0005737">
    <property type="term" value="C:cytoplasm"/>
    <property type="evidence" value="ECO:0007669"/>
    <property type="project" value="UniProtKB-SubCell"/>
</dbReference>
<dbReference type="GO" id="GO:0030027">
    <property type="term" value="C:lamellipodium"/>
    <property type="evidence" value="ECO:0007669"/>
    <property type="project" value="Ensembl"/>
</dbReference>
<dbReference type="GO" id="GO:0005886">
    <property type="term" value="C:plasma membrane"/>
    <property type="evidence" value="ECO:0000318"/>
    <property type="project" value="GO_Central"/>
</dbReference>
<dbReference type="GO" id="GO:0008889">
    <property type="term" value="F:glycerophosphodiester phosphodiesterase activity"/>
    <property type="evidence" value="ECO:0000318"/>
    <property type="project" value="GO_Central"/>
</dbReference>
<dbReference type="GO" id="GO:0047394">
    <property type="term" value="F:glycerophosphoinositol inositolphosphodiesterase activity"/>
    <property type="evidence" value="ECO:0007669"/>
    <property type="project" value="UniProtKB-EC"/>
</dbReference>
<dbReference type="GO" id="GO:0046872">
    <property type="term" value="F:metal ion binding"/>
    <property type="evidence" value="ECO:0007669"/>
    <property type="project" value="UniProtKB-KW"/>
</dbReference>
<dbReference type="GO" id="GO:0007015">
    <property type="term" value="P:actin filament organization"/>
    <property type="evidence" value="ECO:0007669"/>
    <property type="project" value="Ensembl"/>
</dbReference>
<dbReference type="GO" id="GO:0006629">
    <property type="term" value="P:lipid metabolic process"/>
    <property type="evidence" value="ECO:0007669"/>
    <property type="project" value="InterPro"/>
</dbReference>
<dbReference type="GO" id="GO:0045669">
    <property type="term" value="P:positive regulation of osteoblast differentiation"/>
    <property type="evidence" value="ECO:0007669"/>
    <property type="project" value="Ensembl"/>
</dbReference>
<dbReference type="CDD" id="cd08609">
    <property type="entry name" value="GDPD_GDE3"/>
    <property type="match status" value="1"/>
</dbReference>
<dbReference type="Gene3D" id="3.20.20.190">
    <property type="entry name" value="Phosphatidylinositol (PI) phosphodiesterase"/>
    <property type="match status" value="1"/>
</dbReference>
<dbReference type="InterPro" id="IPR030395">
    <property type="entry name" value="GP_PDE_dom"/>
</dbReference>
<dbReference type="InterPro" id="IPR017946">
    <property type="entry name" value="PLC-like_Pdiesterase_TIM-brl"/>
</dbReference>
<dbReference type="PANTHER" id="PTHR23344:SF1">
    <property type="entry name" value="GLYCEROPHOSPHOINOSITOL INOSITOLPHOSPHODIESTERASE GDPD2"/>
    <property type="match status" value="1"/>
</dbReference>
<dbReference type="PANTHER" id="PTHR23344">
    <property type="entry name" value="GLYCEROPHOSPHORYL DIESTER PHOSPHODIESTERASE"/>
    <property type="match status" value="1"/>
</dbReference>
<dbReference type="Pfam" id="PF03009">
    <property type="entry name" value="GDPD"/>
    <property type="match status" value="1"/>
</dbReference>
<dbReference type="Pfam" id="PF13653">
    <property type="entry name" value="GDPD_2"/>
    <property type="match status" value="1"/>
</dbReference>
<dbReference type="SUPFAM" id="SSF51695">
    <property type="entry name" value="PLC-like phosphodiesterases"/>
    <property type="match status" value="1"/>
</dbReference>
<dbReference type="PROSITE" id="PS51704">
    <property type="entry name" value="GP_PDE"/>
    <property type="match status" value="1"/>
</dbReference>
<protein>
    <recommendedName>
        <fullName>Glycerophosphoinositol inositolphosphodiesterase GDPD2</fullName>
        <ecNumber>3.1.4.43</ecNumber>
    </recommendedName>
    <alternativeName>
        <fullName>Glycerophosphodiester phosphodiesterase 3</fullName>
    </alternativeName>
    <alternativeName>
        <fullName>Glycerophosphodiester phosphodiesterase domain-containing protein 2</fullName>
    </alternativeName>
    <alternativeName>
        <fullName>Osteoblast differentiation promoting factor</fullName>
    </alternativeName>
</protein>